<accession>B4TWJ4</accession>
<reference key="1">
    <citation type="journal article" date="2011" name="J. Bacteriol.">
        <title>Comparative genomics of 28 Salmonella enterica isolates: evidence for CRISPR-mediated adaptive sublineage evolution.</title>
        <authorList>
            <person name="Fricke W.F."/>
            <person name="Mammel M.K."/>
            <person name="McDermott P.F."/>
            <person name="Tartera C."/>
            <person name="White D.G."/>
            <person name="Leclerc J.E."/>
            <person name="Ravel J."/>
            <person name="Cebula T.A."/>
        </authorList>
    </citation>
    <scope>NUCLEOTIDE SEQUENCE [LARGE SCALE GENOMIC DNA]</scope>
    <source>
        <strain>CVM19633</strain>
    </source>
</reference>
<feature type="chain" id="PRO_1000128173" description="Small ribosomal subunit protein uS9">
    <location>
        <begin position="1"/>
        <end position="130"/>
    </location>
</feature>
<protein>
    <recommendedName>
        <fullName evidence="1">Small ribosomal subunit protein uS9</fullName>
    </recommendedName>
    <alternativeName>
        <fullName evidence="2">30S ribosomal protein S9</fullName>
    </alternativeName>
</protein>
<proteinExistence type="inferred from homology"/>
<dbReference type="EMBL" id="CP001127">
    <property type="protein sequence ID" value="ACF90122.1"/>
    <property type="molecule type" value="Genomic_DNA"/>
</dbReference>
<dbReference type="RefSeq" id="WP_000829815.1">
    <property type="nucleotide sequence ID" value="NC_011094.1"/>
</dbReference>
<dbReference type="SMR" id="B4TWJ4"/>
<dbReference type="GeneID" id="97393262"/>
<dbReference type="KEGG" id="sew:SeSA_A3536"/>
<dbReference type="HOGENOM" id="CLU_046483_2_1_6"/>
<dbReference type="Proteomes" id="UP000001865">
    <property type="component" value="Chromosome"/>
</dbReference>
<dbReference type="GO" id="GO:0022627">
    <property type="term" value="C:cytosolic small ribosomal subunit"/>
    <property type="evidence" value="ECO:0007669"/>
    <property type="project" value="TreeGrafter"/>
</dbReference>
<dbReference type="GO" id="GO:0003723">
    <property type="term" value="F:RNA binding"/>
    <property type="evidence" value="ECO:0007669"/>
    <property type="project" value="TreeGrafter"/>
</dbReference>
<dbReference type="GO" id="GO:0003735">
    <property type="term" value="F:structural constituent of ribosome"/>
    <property type="evidence" value="ECO:0007669"/>
    <property type="project" value="InterPro"/>
</dbReference>
<dbReference type="GO" id="GO:0006412">
    <property type="term" value="P:translation"/>
    <property type="evidence" value="ECO:0007669"/>
    <property type="project" value="UniProtKB-UniRule"/>
</dbReference>
<dbReference type="FunFam" id="3.30.230.10:FF:000001">
    <property type="entry name" value="30S ribosomal protein S9"/>
    <property type="match status" value="1"/>
</dbReference>
<dbReference type="Gene3D" id="3.30.230.10">
    <property type="match status" value="1"/>
</dbReference>
<dbReference type="HAMAP" id="MF_00532_B">
    <property type="entry name" value="Ribosomal_uS9_B"/>
    <property type="match status" value="1"/>
</dbReference>
<dbReference type="InterPro" id="IPR020568">
    <property type="entry name" value="Ribosomal_Su5_D2-typ_SF"/>
</dbReference>
<dbReference type="InterPro" id="IPR000754">
    <property type="entry name" value="Ribosomal_uS9"/>
</dbReference>
<dbReference type="InterPro" id="IPR023035">
    <property type="entry name" value="Ribosomal_uS9_bac/plastid"/>
</dbReference>
<dbReference type="InterPro" id="IPR020574">
    <property type="entry name" value="Ribosomal_uS9_CS"/>
</dbReference>
<dbReference type="InterPro" id="IPR014721">
    <property type="entry name" value="Ribsml_uS5_D2-typ_fold_subgr"/>
</dbReference>
<dbReference type="NCBIfam" id="NF001099">
    <property type="entry name" value="PRK00132.1"/>
    <property type="match status" value="1"/>
</dbReference>
<dbReference type="PANTHER" id="PTHR21569">
    <property type="entry name" value="RIBOSOMAL PROTEIN S9"/>
    <property type="match status" value="1"/>
</dbReference>
<dbReference type="PANTHER" id="PTHR21569:SF1">
    <property type="entry name" value="SMALL RIBOSOMAL SUBUNIT PROTEIN US9M"/>
    <property type="match status" value="1"/>
</dbReference>
<dbReference type="Pfam" id="PF00380">
    <property type="entry name" value="Ribosomal_S9"/>
    <property type="match status" value="1"/>
</dbReference>
<dbReference type="SUPFAM" id="SSF54211">
    <property type="entry name" value="Ribosomal protein S5 domain 2-like"/>
    <property type="match status" value="1"/>
</dbReference>
<dbReference type="PROSITE" id="PS00360">
    <property type="entry name" value="RIBOSOMAL_S9"/>
    <property type="match status" value="1"/>
</dbReference>
<evidence type="ECO:0000255" key="1">
    <source>
        <dbReference type="HAMAP-Rule" id="MF_00532"/>
    </source>
</evidence>
<evidence type="ECO:0000305" key="2"/>
<keyword id="KW-0687">Ribonucleoprotein</keyword>
<keyword id="KW-0689">Ribosomal protein</keyword>
<gene>
    <name evidence="1" type="primary">rpsI</name>
    <name type="ordered locus">SeSA_A3536</name>
</gene>
<comment type="similarity">
    <text evidence="1">Belongs to the universal ribosomal protein uS9 family.</text>
</comment>
<organism>
    <name type="scientific">Salmonella schwarzengrund (strain CVM19633)</name>
    <dbReference type="NCBI Taxonomy" id="439843"/>
    <lineage>
        <taxon>Bacteria</taxon>
        <taxon>Pseudomonadati</taxon>
        <taxon>Pseudomonadota</taxon>
        <taxon>Gammaproteobacteria</taxon>
        <taxon>Enterobacterales</taxon>
        <taxon>Enterobacteriaceae</taxon>
        <taxon>Salmonella</taxon>
    </lineage>
</organism>
<name>RS9_SALSV</name>
<sequence>MAENQYYGTGRRKSSAARVFIKPGNGKIVINQRSLEQYFGRETARMVVRQPLELVDMVEKLDLYITVKGGGISGQAGAIRHGITRALMEYDESLRGELRKAGFVTRDARQVERKKVGLRKARRRPQFSKR</sequence>